<accession>B3PK59</accession>
<comment type="function">
    <text evidence="1">Located at the top of the head of the 30S subunit, it contacts several helices of the 16S rRNA. In the 70S ribosome it contacts the 23S rRNA (bridge B1a) and protein L5 of the 50S subunit (bridge B1b), connecting the 2 subunits; these bridges are implicated in subunit movement. Contacts the tRNAs in the A and P-sites.</text>
</comment>
<comment type="subunit">
    <text evidence="1">Part of the 30S ribosomal subunit. Forms a loose heterodimer with protein S19. Forms two bridges to the 50S subunit in the 70S ribosome.</text>
</comment>
<comment type="similarity">
    <text evidence="1">Belongs to the universal ribosomal protein uS13 family.</text>
</comment>
<dbReference type="EMBL" id="CP000934">
    <property type="protein sequence ID" value="ACE84398.1"/>
    <property type="molecule type" value="Genomic_DNA"/>
</dbReference>
<dbReference type="RefSeq" id="WP_012486384.1">
    <property type="nucleotide sequence ID" value="NC_010995.1"/>
</dbReference>
<dbReference type="SMR" id="B3PK59"/>
<dbReference type="STRING" id="498211.CJA_0721"/>
<dbReference type="KEGG" id="cja:CJA_0721"/>
<dbReference type="eggNOG" id="COG0099">
    <property type="taxonomic scope" value="Bacteria"/>
</dbReference>
<dbReference type="HOGENOM" id="CLU_103849_1_2_6"/>
<dbReference type="OrthoDB" id="9803610at2"/>
<dbReference type="Proteomes" id="UP000001036">
    <property type="component" value="Chromosome"/>
</dbReference>
<dbReference type="GO" id="GO:0005829">
    <property type="term" value="C:cytosol"/>
    <property type="evidence" value="ECO:0007669"/>
    <property type="project" value="TreeGrafter"/>
</dbReference>
<dbReference type="GO" id="GO:0015935">
    <property type="term" value="C:small ribosomal subunit"/>
    <property type="evidence" value="ECO:0007669"/>
    <property type="project" value="TreeGrafter"/>
</dbReference>
<dbReference type="GO" id="GO:0019843">
    <property type="term" value="F:rRNA binding"/>
    <property type="evidence" value="ECO:0007669"/>
    <property type="project" value="UniProtKB-UniRule"/>
</dbReference>
<dbReference type="GO" id="GO:0003735">
    <property type="term" value="F:structural constituent of ribosome"/>
    <property type="evidence" value="ECO:0007669"/>
    <property type="project" value="InterPro"/>
</dbReference>
<dbReference type="GO" id="GO:0000049">
    <property type="term" value="F:tRNA binding"/>
    <property type="evidence" value="ECO:0007669"/>
    <property type="project" value="UniProtKB-UniRule"/>
</dbReference>
<dbReference type="GO" id="GO:0006412">
    <property type="term" value="P:translation"/>
    <property type="evidence" value="ECO:0007669"/>
    <property type="project" value="UniProtKB-UniRule"/>
</dbReference>
<dbReference type="FunFam" id="1.10.8.50:FF:000001">
    <property type="entry name" value="30S ribosomal protein S13"/>
    <property type="match status" value="1"/>
</dbReference>
<dbReference type="FunFam" id="4.10.910.10:FF:000001">
    <property type="entry name" value="30S ribosomal protein S13"/>
    <property type="match status" value="1"/>
</dbReference>
<dbReference type="Gene3D" id="1.10.8.50">
    <property type="match status" value="1"/>
</dbReference>
<dbReference type="Gene3D" id="4.10.910.10">
    <property type="entry name" value="30s ribosomal protein s13, domain 2"/>
    <property type="match status" value="1"/>
</dbReference>
<dbReference type="HAMAP" id="MF_01315">
    <property type="entry name" value="Ribosomal_uS13"/>
    <property type="match status" value="1"/>
</dbReference>
<dbReference type="InterPro" id="IPR027437">
    <property type="entry name" value="Rbsml_uS13_C"/>
</dbReference>
<dbReference type="InterPro" id="IPR001892">
    <property type="entry name" value="Ribosomal_uS13"/>
</dbReference>
<dbReference type="InterPro" id="IPR010979">
    <property type="entry name" value="Ribosomal_uS13-like_H2TH"/>
</dbReference>
<dbReference type="InterPro" id="IPR019980">
    <property type="entry name" value="Ribosomal_uS13_bac-type"/>
</dbReference>
<dbReference type="InterPro" id="IPR018269">
    <property type="entry name" value="Ribosomal_uS13_CS"/>
</dbReference>
<dbReference type="NCBIfam" id="TIGR03631">
    <property type="entry name" value="uS13_bact"/>
    <property type="match status" value="1"/>
</dbReference>
<dbReference type="PANTHER" id="PTHR10871">
    <property type="entry name" value="30S RIBOSOMAL PROTEIN S13/40S RIBOSOMAL PROTEIN S18"/>
    <property type="match status" value="1"/>
</dbReference>
<dbReference type="PANTHER" id="PTHR10871:SF1">
    <property type="entry name" value="SMALL RIBOSOMAL SUBUNIT PROTEIN US13M"/>
    <property type="match status" value="1"/>
</dbReference>
<dbReference type="Pfam" id="PF00416">
    <property type="entry name" value="Ribosomal_S13"/>
    <property type="match status" value="1"/>
</dbReference>
<dbReference type="PIRSF" id="PIRSF002134">
    <property type="entry name" value="Ribosomal_S13"/>
    <property type="match status" value="1"/>
</dbReference>
<dbReference type="SUPFAM" id="SSF46946">
    <property type="entry name" value="S13-like H2TH domain"/>
    <property type="match status" value="1"/>
</dbReference>
<dbReference type="PROSITE" id="PS00646">
    <property type="entry name" value="RIBOSOMAL_S13_1"/>
    <property type="match status" value="1"/>
</dbReference>
<dbReference type="PROSITE" id="PS50159">
    <property type="entry name" value="RIBOSOMAL_S13_2"/>
    <property type="match status" value="1"/>
</dbReference>
<reference key="1">
    <citation type="journal article" date="2008" name="J. Bacteriol.">
        <title>Insights into plant cell wall degradation from the genome sequence of the soil bacterium Cellvibrio japonicus.</title>
        <authorList>
            <person name="DeBoy R.T."/>
            <person name="Mongodin E.F."/>
            <person name="Fouts D.E."/>
            <person name="Tailford L.E."/>
            <person name="Khouri H."/>
            <person name="Emerson J.B."/>
            <person name="Mohamoud Y."/>
            <person name="Watkins K."/>
            <person name="Henrissat B."/>
            <person name="Gilbert H.J."/>
            <person name="Nelson K.E."/>
        </authorList>
    </citation>
    <scope>NUCLEOTIDE SEQUENCE [LARGE SCALE GENOMIC DNA]</scope>
    <source>
        <strain>Ueda107</strain>
    </source>
</reference>
<name>RS13_CELJU</name>
<feature type="chain" id="PRO_1000141235" description="Small ribosomal subunit protein uS13">
    <location>
        <begin position="1"/>
        <end position="118"/>
    </location>
</feature>
<feature type="region of interest" description="Disordered" evidence="2">
    <location>
        <begin position="94"/>
        <end position="118"/>
    </location>
</feature>
<evidence type="ECO:0000255" key="1">
    <source>
        <dbReference type="HAMAP-Rule" id="MF_01315"/>
    </source>
</evidence>
<evidence type="ECO:0000256" key="2">
    <source>
        <dbReference type="SAM" id="MobiDB-lite"/>
    </source>
</evidence>
<evidence type="ECO:0000305" key="3"/>
<protein>
    <recommendedName>
        <fullName evidence="1">Small ribosomal subunit protein uS13</fullName>
    </recommendedName>
    <alternativeName>
        <fullName evidence="3">30S ribosomal protein S13</fullName>
    </alternativeName>
</protein>
<organism>
    <name type="scientific">Cellvibrio japonicus (strain Ueda107)</name>
    <name type="common">Pseudomonas fluorescens subsp. cellulosa</name>
    <dbReference type="NCBI Taxonomy" id="498211"/>
    <lineage>
        <taxon>Bacteria</taxon>
        <taxon>Pseudomonadati</taxon>
        <taxon>Pseudomonadota</taxon>
        <taxon>Gammaproteobacteria</taxon>
        <taxon>Cellvibrionales</taxon>
        <taxon>Cellvibrionaceae</taxon>
        <taxon>Cellvibrio</taxon>
    </lineage>
</organism>
<keyword id="KW-1185">Reference proteome</keyword>
<keyword id="KW-0687">Ribonucleoprotein</keyword>
<keyword id="KW-0689">Ribosomal protein</keyword>
<keyword id="KW-0694">RNA-binding</keyword>
<keyword id="KW-0699">rRNA-binding</keyword>
<keyword id="KW-0820">tRNA-binding</keyword>
<proteinExistence type="inferred from homology"/>
<gene>
    <name evidence="1" type="primary">rpsM</name>
    <name type="ordered locus">CJA_0721</name>
</gene>
<sequence>MARIAGVNIPDNKHAVISLTYVYGIGRTTAKQICAATGIAEDTKIGTLSEEQMDAIRAEVGKHTVEGDLRREINMNIKRLMDLGCYRGLRHRRGLPLRGQRTKTNARTRKGPRKPIKK</sequence>